<dbReference type="EMBL" id="U00090">
    <property type="protein sequence ID" value="AAB91666.1"/>
    <property type="molecule type" value="Genomic_DNA"/>
</dbReference>
<dbReference type="RefSeq" id="NP_443854.1">
    <property type="nucleotide sequence ID" value="NC_000914.2"/>
</dbReference>
<dbReference type="KEGG" id="rhi:NGR_a03720"/>
<dbReference type="PATRIC" id="fig|394.7.peg.381"/>
<dbReference type="eggNOG" id="COG3203">
    <property type="taxonomic scope" value="Bacteria"/>
</dbReference>
<dbReference type="HOGENOM" id="CLU_044836_1_0_5"/>
<dbReference type="OrthoDB" id="7801681at2"/>
<dbReference type="Proteomes" id="UP000001054">
    <property type="component" value="Plasmid pNGR234a"/>
</dbReference>
<dbReference type="GO" id="GO:0009279">
    <property type="term" value="C:cell outer membrane"/>
    <property type="evidence" value="ECO:0007669"/>
    <property type="project" value="UniProtKB-SubCell"/>
</dbReference>
<dbReference type="GO" id="GO:0046930">
    <property type="term" value="C:pore complex"/>
    <property type="evidence" value="ECO:0007669"/>
    <property type="project" value="UniProtKB-KW"/>
</dbReference>
<dbReference type="GO" id="GO:0015288">
    <property type="term" value="F:porin activity"/>
    <property type="evidence" value="ECO:0007669"/>
    <property type="project" value="UniProtKB-KW"/>
</dbReference>
<dbReference type="GO" id="GO:0006811">
    <property type="term" value="P:monoatomic ion transport"/>
    <property type="evidence" value="ECO:0007669"/>
    <property type="project" value="UniProtKB-KW"/>
</dbReference>
<dbReference type="InterPro" id="IPR003684">
    <property type="entry name" value="Porin_alphabac"/>
</dbReference>
<dbReference type="Pfam" id="PF02530">
    <property type="entry name" value="Porin_2"/>
    <property type="match status" value="1"/>
</dbReference>
<dbReference type="SUPFAM" id="SSF56935">
    <property type="entry name" value="Porins"/>
    <property type="match status" value="1"/>
</dbReference>
<feature type="signal peptide" evidence="4">
    <location>
        <begin position="1"/>
        <end position="17"/>
    </location>
</feature>
<feature type="chain" id="PRO_0000014163" description="Putative outer membrane protein y4fJ">
    <location>
        <begin position="18"/>
        <end position="343"/>
    </location>
</feature>
<reference key="1">
    <citation type="journal article" date="1997" name="Nature">
        <title>Molecular basis of symbiosis between Rhizobium and legumes.</title>
        <authorList>
            <person name="Freiberg C.A."/>
            <person name="Fellay R."/>
            <person name="Bairoch A."/>
            <person name="Broughton W.J."/>
            <person name="Rosenthal A."/>
            <person name="Perret X."/>
        </authorList>
    </citation>
    <scope>NUCLEOTIDE SEQUENCE [LARGE SCALE GENOMIC DNA]</scope>
    <source>
        <strain>NBRC 101917 / NGR234</strain>
    </source>
</reference>
<reference key="2">
    <citation type="journal article" date="2009" name="Appl. Environ. Microbiol.">
        <title>Rhizobium sp. strain NGR234 possesses a remarkable number of secretion systems.</title>
        <authorList>
            <person name="Schmeisser C."/>
            <person name="Liesegang H."/>
            <person name="Krysciak D."/>
            <person name="Bakkou N."/>
            <person name="Le Quere A."/>
            <person name="Wollherr A."/>
            <person name="Heinemeyer I."/>
            <person name="Morgenstern B."/>
            <person name="Pommerening-Roeser A."/>
            <person name="Flores M."/>
            <person name="Palacios R."/>
            <person name="Brenner S."/>
            <person name="Gottschalk G."/>
            <person name="Schmitz R.A."/>
            <person name="Broughton W.J."/>
            <person name="Perret X."/>
            <person name="Strittmatter A.W."/>
            <person name="Streit W.R."/>
        </authorList>
    </citation>
    <scope>NUCLEOTIDE SEQUENCE [LARGE SCALE GENOMIC DNA]</scope>
    <source>
        <strain>NBRC 101917 / NGR234</strain>
    </source>
</reference>
<evidence type="ECO:0000250" key="1"/>
<evidence type="ECO:0000250" key="2">
    <source>
        <dbReference type="UniProtKB" id="B2SAB9"/>
    </source>
</evidence>
<evidence type="ECO:0000250" key="3">
    <source>
        <dbReference type="UniProtKB" id="Q05811"/>
    </source>
</evidence>
<evidence type="ECO:0000255" key="4"/>
<evidence type="ECO:0000305" key="5"/>
<proteinExistence type="inferred from homology"/>
<accession>P55448</accession>
<geneLocation type="plasmid">
    <name>sym pNGR234a</name>
</geneLocation>
<sequence>MRMNFSTVLLGSSVALAAVSGAQAADAIVAAEPEPMDYVRVCDAFGIGYFYIPGTETCLKINGYARFQVSFGPDEVNKRQGWGAQGTSDWDAFSRAYIAFSAKSDTELGTLTGFFASEFNADNDSDVGDSLINLDEAYIQLGGFKAGFFYSWWDKGLNGETDSLANITEFNSIAYLYEGGAFQAGVAINELEGATTKANGIGVQGIVSATVGGVSIDLLGGYDTEVEEGAIRALVSAELGPGVFQIAGVWASDPNVYFAASEWTVATSYRYNATEKLAITPGLHYWGDYGFVSDADQWRGGLAVDYKITSGLASRVSVQYTSRDIGADTEDFVSGFVRLQRDF</sequence>
<keyword id="KW-0998">Cell outer membrane</keyword>
<keyword id="KW-0406">Ion transport</keyword>
<keyword id="KW-0472">Membrane</keyword>
<keyword id="KW-0614">Plasmid</keyword>
<keyword id="KW-0626">Porin</keyword>
<keyword id="KW-1185">Reference proteome</keyword>
<keyword id="KW-0732">Signal</keyword>
<keyword id="KW-0812">Transmembrane</keyword>
<keyword id="KW-1134">Transmembrane beta strand</keyword>
<keyword id="KW-0813">Transport</keyword>
<organism>
    <name type="scientific">Sinorhizobium fredii (strain NBRC 101917 / NGR234)</name>
    <dbReference type="NCBI Taxonomy" id="394"/>
    <lineage>
        <taxon>Bacteria</taxon>
        <taxon>Pseudomonadati</taxon>
        <taxon>Pseudomonadota</taxon>
        <taxon>Alphaproteobacteria</taxon>
        <taxon>Hyphomicrobiales</taxon>
        <taxon>Rhizobiaceae</taxon>
        <taxon>Sinorhizobium/Ensifer group</taxon>
        <taxon>Sinorhizobium</taxon>
    </lineage>
</organism>
<protein>
    <recommendedName>
        <fullName>Putative outer membrane protein y4fJ</fullName>
    </recommendedName>
</protein>
<comment type="function">
    <text evidence="2">May act as an outer membrane pore.</text>
</comment>
<comment type="subcellular location">
    <subcellularLocation>
        <location evidence="3">Cell outer membrane</location>
        <topology evidence="1">Peripheral membrane protein</topology>
    </subcellularLocation>
</comment>
<comment type="similarity">
    <text evidence="5">Belongs to the alphaproteobacteria porin family.</text>
</comment>
<name>Y4FJ_SINFN</name>
<gene>
    <name type="ordered locus">NGR_a03720</name>
    <name type="ORF">y4fJ</name>
</gene>